<organism>
    <name type="scientific">Clostridium kluyveri (strain ATCC 8527 / DSM 555 / NBRC 12016 / NCIMB 10680 / K1)</name>
    <dbReference type="NCBI Taxonomy" id="431943"/>
    <lineage>
        <taxon>Bacteria</taxon>
        <taxon>Bacillati</taxon>
        <taxon>Bacillota</taxon>
        <taxon>Clostridia</taxon>
        <taxon>Eubacteriales</taxon>
        <taxon>Clostridiaceae</taxon>
        <taxon>Clostridium</taxon>
    </lineage>
</organism>
<feature type="chain" id="PRO_1000087121" description="Large ribosomal subunit protein uL14">
    <location>
        <begin position="1"/>
        <end position="122"/>
    </location>
</feature>
<reference key="1">
    <citation type="journal article" date="2008" name="Proc. Natl. Acad. Sci. U.S.A.">
        <title>The genome of Clostridium kluyveri, a strict anaerobe with unique metabolic features.</title>
        <authorList>
            <person name="Seedorf H."/>
            <person name="Fricke W.F."/>
            <person name="Veith B."/>
            <person name="Brueggemann H."/>
            <person name="Liesegang H."/>
            <person name="Strittmatter A."/>
            <person name="Miethke M."/>
            <person name="Buckel W."/>
            <person name="Hinderberger J."/>
            <person name="Li F."/>
            <person name="Hagemeier C."/>
            <person name="Thauer R.K."/>
            <person name="Gottschalk G."/>
        </authorList>
    </citation>
    <scope>NUCLEOTIDE SEQUENCE [LARGE SCALE GENOMIC DNA]</scope>
    <source>
        <strain>ATCC 8527 / DSM 555 / NBRC 12016 / NCIMB 10680 / K1</strain>
    </source>
</reference>
<comment type="function">
    <text evidence="1">Binds to 23S rRNA. Forms part of two intersubunit bridges in the 70S ribosome.</text>
</comment>
<comment type="subunit">
    <text evidence="1">Part of the 50S ribosomal subunit. Forms a cluster with proteins L3 and L19. In the 70S ribosome, L14 and L19 interact and together make contacts with the 16S rRNA in bridges B5 and B8.</text>
</comment>
<comment type="similarity">
    <text evidence="1">Belongs to the universal ribosomal protein uL14 family.</text>
</comment>
<sequence>MIQQQTLLKVADNSGAKEIMCIRVLGGSKRKWGNIGDIIVASVKSATPGGVVKKGEVVKAVIVRSARGLRRTDGSYIKFDENAAVIIKEDKQPRGTRIFGPVARELRDKDFTKILSLAPEVL</sequence>
<proteinExistence type="inferred from homology"/>
<keyword id="KW-1185">Reference proteome</keyword>
<keyword id="KW-0687">Ribonucleoprotein</keyword>
<keyword id="KW-0689">Ribosomal protein</keyword>
<keyword id="KW-0694">RNA-binding</keyword>
<keyword id="KW-0699">rRNA-binding</keyword>
<accession>A5N4Q7</accession>
<name>RL14_CLOK5</name>
<protein>
    <recommendedName>
        <fullName evidence="1">Large ribosomal subunit protein uL14</fullName>
    </recommendedName>
    <alternativeName>
        <fullName evidence="2">50S ribosomal protein L14</fullName>
    </alternativeName>
</protein>
<dbReference type="EMBL" id="CP000673">
    <property type="protein sequence ID" value="EDK32288.1"/>
    <property type="molecule type" value="Genomic_DNA"/>
</dbReference>
<dbReference type="RefSeq" id="WP_011988813.1">
    <property type="nucleotide sequence ID" value="NC_009706.1"/>
</dbReference>
<dbReference type="SMR" id="A5N4Q7"/>
<dbReference type="STRING" id="431943.CKL_0234"/>
<dbReference type="KEGG" id="ckl:CKL_0234"/>
<dbReference type="eggNOG" id="COG0093">
    <property type="taxonomic scope" value="Bacteria"/>
</dbReference>
<dbReference type="HOGENOM" id="CLU_095071_2_1_9"/>
<dbReference type="Proteomes" id="UP000002411">
    <property type="component" value="Chromosome"/>
</dbReference>
<dbReference type="GO" id="GO:0022625">
    <property type="term" value="C:cytosolic large ribosomal subunit"/>
    <property type="evidence" value="ECO:0007669"/>
    <property type="project" value="TreeGrafter"/>
</dbReference>
<dbReference type="GO" id="GO:0070180">
    <property type="term" value="F:large ribosomal subunit rRNA binding"/>
    <property type="evidence" value="ECO:0007669"/>
    <property type="project" value="TreeGrafter"/>
</dbReference>
<dbReference type="GO" id="GO:0003735">
    <property type="term" value="F:structural constituent of ribosome"/>
    <property type="evidence" value="ECO:0007669"/>
    <property type="project" value="InterPro"/>
</dbReference>
<dbReference type="GO" id="GO:0006412">
    <property type="term" value="P:translation"/>
    <property type="evidence" value="ECO:0007669"/>
    <property type="project" value="UniProtKB-UniRule"/>
</dbReference>
<dbReference type="CDD" id="cd00337">
    <property type="entry name" value="Ribosomal_uL14"/>
    <property type="match status" value="1"/>
</dbReference>
<dbReference type="FunFam" id="2.40.150.20:FF:000001">
    <property type="entry name" value="50S ribosomal protein L14"/>
    <property type="match status" value="1"/>
</dbReference>
<dbReference type="Gene3D" id="2.40.150.20">
    <property type="entry name" value="Ribosomal protein L14"/>
    <property type="match status" value="1"/>
</dbReference>
<dbReference type="HAMAP" id="MF_01367">
    <property type="entry name" value="Ribosomal_uL14"/>
    <property type="match status" value="1"/>
</dbReference>
<dbReference type="InterPro" id="IPR000218">
    <property type="entry name" value="Ribosomal_uL14"/>
</dbReference>
<dbReference type="InterPro" id="IPR005745">
    <property type="entry name" value="Ribosomal_uL14_bac-type"/>
</dbReference>
<dbReference type="InterPro" id="IPR019972">
    <property type="entry name" value="Ribosomal_uL14_CS"/>
</dbReference>
<dbReference type="InterPro" id="IPR036853">
    <property type="entry name" value="Ribosomal_uL14_sf"/>
</dbReference>
<dbReference type="NCBIfam" id="TIGR01067">
    <property type="entry name" value="rplN_bact"/>
    <property type="match status" value="1"/>
</dbReference>
<dbReference type="PANTHER" id="PTHR11761">
    <property type="entry name" value="50S/60S RIBOSOMAL PROTEIN L14/L23"/>
    <property type="match status" value="1"/>
</dbReference>
<dbReference type="PANTHER" id="PTHR11761:SF3">
    <property type="entry name" value="LARGE RIBOSOMAL SUBUNIT PROTEIN UL14M"/>
    <property type="match status" value="1"/>
</dbReference>
<dbReference type="Pfam" id="PF00238">
    <property type="entry name" value="Ribosomal_L14"/>
    <property type="match status" value="1"/>
</dbReference>
<dbReference type="SMART" id="SM01374">
    <property type="entry name" value="Ribosomal_L14"/>
    <property type="match status" value="1"/>
</dbReference>
<dbReference type="SUPFAM" id="SSF50193">
    <property type="entry name" value="Ribosomal protein L14"/>
    <property type="match status" value="1"/>
</dbReference>
<dbReference type="PROSITE" id="PS00049">
    <property type="entry name" value="RIBOSOMAL_L14"/>
    <property type="match status" value="1"/>
</dbReference>
<evidence type="ECO:0000255" key="1">
    <source>
        <dbReference type="HAMAP-Rule" id="MF_01367"/>
    </source>
</evidence>
<evidence type="ECO:0000305" key="2"/>
<gene>
    <name evidence="1" type="primary">rplN</name>
    <name type="ordered locus">CKL_0234</name>
</gene>